<name>RS10_CERS5</name>
<protein>
    <recommendedName>
        <fullName evidence="1">Small ribosomal subunit protein uS10</fullName>
    </recommendedName>
    <alternativeName>
        <fullName evidence="2">30S ribosomal protein S10</fullName>
    </alternativeName>
</protein>
<gene>
    <name evidence="1" type="primary">rpsJ</name>
    <name type="ordered locus">Rsph17025_2535</name>
</gene>
<reference key="1">
    <citation type="submission" date="2007-04" db="EMBL/GenBank/DDBJ databases">
        <title>Complete sequence of chromosome of Rhodobacter sphaeroides ATCC 17025.</title>
        <authorList>
            <consortium name="US DOE Joint Genome Institute"/>
            <person name="Copeland A."/>
            <person name="Lucas S."/>
            <person name="Lapidus A."/>
            <person name="Barry K."/>
            <person name="Detter J.C."/>
            <person name="Glavina del Rio T."/>
            <person name="Hammon N."/>
            <person name="Israni S."/>
            <person name="Dalin E."/>
            <person name="Tice H."/>
            <person name="Pitluck S."/>
            <person name="Chertkov O."/>
            <person name="Brettin T."/>
            <person name="Bruce D."/>
            <person name="Han C."/>
            <person name="Schmutz J."/>
            <person name="Larimer F."/>
            <person name="Land M."/>
            <person name="Hauser L."/>
            <person name="Kyrpides N."/>
            <person name="Kim E."/>
            <person name="Richardson P."/>
            <person name="Mackenzie C."/>
            <person name="Choudhary M."/>
            <person name="Donohue T.J."/>
            <person name="Kaplan S."/>
        </authorList>
    </citation>
    <scope>NUCLEOTIDE SEQUENCE [LARGE SCALE GENOMIC DNA]</scope>
    <source>
        <strain>ATCC 17025 / ATH 2.4.3</strain>
    </source>
</reference>
<organism>
    <name type="scientific">Cereibacter sphaeroides (strain ATCC 17025 / ATH 2.4.3)</name>
    <name type="common">Rhodobacter sphaeroides</name>
    <dbReference type="NCBI Taxonomy" id="349102"/>
    <lineage>
        <taxon>Bacteria</taxon>
        <taxon>Pseudomonadati</taxon>
        <taxon>Pseudomonadota</taxon>
        <taxon>Alphaproteobacteria</taxon>
        <taxon>Rhodobacterales</taxon>
        <taxon>Paracoccaceae</taxon>
        <taxon>Cereibacter</taxon>
    </lineage>
</organism>
<accession>A4WVK9</accession>
<proteinExistence type="inferred from homology"/>
<feature type="chain" id="PRO_1000015098" description="Small ribosomal subunit protein uS10">
    <location>
        <begin position="1"/>
        <end position="102"/>
    </location>
</feature>
<sequence length="102" mass="11598">MQGQTIRIRLKAFDYRVLDASTQEIVNTAKRTGAQVRGPIPLPNKIEKFTVLRGPHIDKKSRDQWEIRTHKRLLDIVDPTPQTVDALMKLDLAAGVDIQIKV</sequence>
<comment type="function">
    <text evidence="1">Involved in the binding of tRNA to the ribosomes.</text>
</comment>
<comment type="subunit">
    <text evidence="1">Part of the 30S ribosomal subunit.</text>
</comment>
<comment type="similarity">
    <text evidence="1">Belongs to the universal ribosomal protein uS10 family.</text>
</comment>
<keyword id="KW-0687">Ribonucleoprotein</keyword>
<keyword id="KW-0689">Ribosomal protein</keyword>
<dbReference type="EMBL" id="CP000661">
    <property type="protein sequence ID" value="ABP71423.1"/>
    <property type="molecule type" value="Genomic_DNA"/>
</dbReference>
<dbReference type="SMR" id="A4WVK9"/>
<dbReference type="STRING" id="349102.Rsph17025_2535"/>
<dbReference type="KEGG" id="rsq:Rsph17025_2535"/>
<dbReference type="eggNOG" id="COG0051">
    <property type="taxonomic scope" value="Bacteria"/>
</dbReference>
<dbReference type="HOGENOM" id="CLU_122625_1_3_5"/>
<dbReference type="BioCyc" id="RSPH349102:G1G8M-2613-MONOMER"/>
<dbReference type="GO" id="GO:1990904">
    <property type="term" value="C:ribonucleoprotein complex"/>
    <property type="evidence" value="ECO:0007669"/>
    <property type="project" value="UniProtKB-KW"/>
</dbReference>
<dbReference type="GO" id="GO:0005840">
    <property type="term" value="C:ribosome"/>
    <property type="evidence" value="ECO:0007669"/>
    <property type="project" value="UniProtKB-KW"/>
</dbReference>
<dbReference type="GO" id="GO:0003735">
    <property type="term" value="F:structural constituent of ribosome"/>
    <property type="evidence" value="ECO:0007669"/>
    <property type="project" value="InterPro"/>
</dbReference>
<dbReference type="GO" id="GO:0000049">
    <property type="term" value="F:tRNA binding"/>
    <property type="evidence" value="ECO:0007669"/>
    <property type="project" value="UniProtKB-UniRule"/>
</dbReference>
<dbReference type="GO" id="GO:0006412">
    <property type="term" value="P:translation"/>
    <property type="evidence" value="ECO:0007669"/>
    <property type="project" value="UniProtKB-UniRule"/>
</dbReference>
<dbReference type="FunFam" id="3.30.70.600:FF:000001">
    <property type="entry name" value="30S ribosomal protein S10"/>
    <property type="match status" value="1"/>
</dbReference>
<dbReference type="Gene3D" id="3.30.70.600">
    <property type="entry name" value="Ribosomal protein S10 domain"/>
    <property type="match status" value="1"/>
</dbReference>
<dbReference type="HAMAP" id="MF_00508">
    <property type="entry name" value="Ribosomal_uS10"/>
    <property type="match status" value="1"/>
</dbReference>
<dbReference type="InterPro" id="IPR001848">
    <property type="entry name" value="Ribosomal_uS10"/>
</dbReference>
<dbReference type="InterPro" id="IPR027486">
    <property type="entry name" value="Ribosomal_uS10_dom"/>
</dbReference>
<dbReference type="InterPro" id="IPR036838">
    <property type="entry name" value="Ribosomal_uS10_dom_sf"/>
</dbReference>
<dbReference type="NCBIfam" id="NF001861">
    <property type="entry name" value="PRK00596.1"/>
    <property type="match status" value="1"/>
</dbReference>
<dbReference type="NCBIfam" id="TIGR01049">
    <property type="entry name" value="rpsJ_bact"/>
    <property type="match status" value="1"/>
</dbReference>
<dbReference type="PANTHER" id="PTHR11700">
    <property type="entry name" value="30S RIBOSOMAL PROTEIN S10 FAMILY MEMBER"/>
    <property type="match status" value="1"/>
</dbReference>
<dbReference type="Pfam" id="PF00338">
    <property type="entry name" value="Ribosomal_S10"/>
    <property type="match status" value="1"/>
</dbReference>
<dbReference type="PRINTS" id="PR00971">
    <property type="entry name" value="RIBOSOMALS10"/>
</dbReference>
<dbReference type="SMART" id="SM01403">
    <property type="entry name" value="Ribosomal_S10"/>
    <property type="match status" value="1"/>
</dbReference>
<dbReference type="SUPFAM" id="SSF54999">
    <property type="entry name" value="Ribosomal protein S10"/>
    <property type="match status" value="1"/>
</dbReference>
<evidence type="ECO:0000255" key="1">
    <source>
        <dbReference type="HAMAP-Rule" id="MF_00508"/>
    </source>
</evidence>
<evidence type="ECO:0000305" key="2"/>